<gene>
    <name type="primary">HSP90</name>
    <name type="ordered locus">CAALFM_C702030WA</name>
    <name type="ORF">CaJ7.0234</name>
    <name type="ORF">CaO19.13868</name>
    <name type="ORF">CaO19.6515</name>
</gene>
<protein>
    <recommendedName>
        <fullName>Heat shock protein 90 homolog</fullName>
    </recommendedName>
</protein>
<dbReference type="EMBL" id="X81025">
    <property type="protein sequence ID" value="CAA56931.1"/>
    <property type="molecule type" value="Genomic_DNA"/>
</dbReference>
<dbReference type="EMBL" id="AP006852">
    <property type="protein sequence ID" value="BAE44720.1"/>
    <property type="molecule type" value="Genomic_DNA"/>
</dbReference>
<dbReference type="EMBL" id="CP017629">
    <property type="protein sequence ID" value="AOW30566.1"/>
    <property type="molecule type" value="Genomic_DNA"/>
</dbReference>
<dbReference type="RefSeq" id="XP_721353.1">
    <property type="nucleotide sequence ID" value="XM_716260.1"/>
</dbReference>
<dbReference type="PDB" id="6CJI">
    <property type="method" value="X-ray"/>
    <property type="resolution" value="1.64 A"/>
    <property type="chains" value="A=7-218"/>
</dbReference>
<dbReference type="PDB" id="6CJJ">
    <property type="method" value="X-ray"/>
    <property type="resolution" value="1.74 A"/>
    <property type="chains" value="A=7-218"/>
</dbReference>
<dbReference type="PDB" id="6CJL">
    <property type="method" value="X-ray"/>
    <property type="resolution" value="1.70 A"/>
    <property type="chains" value="A/B=7-218"/>
</dbReference>
<dbReference type="PDB" id="6CJP">
    <property type="method" value="X-ray"/>
    <property type="resolution" value="2.60 A"/>
    <property type="chains" value="A/B=7-218"/>
</dbReference>
<dbReference type="PDB" id="6CJR">
    <property type="method" value="X-ray"/>
    <property type="resolution" value="1.80 A"/>
    <property type="chains" value="A/B=7-218"/>
</dbReference>
<dbReference type="PDB" id="6CJS">
    <property type="method" value="X-ray"/>
    <property type="resolution" value="1.90 A"/>
    <property type="chains" value="A=7-218"/>
</dbReference>
<dbReference type="PDBsum" id="6CJI"/>
<dbReference type="PDBsum" id="6CJJ"/>
<dbReference type="PDBsum" id="6CJL"/>
<dbReference type="PDBsum" id="6CJP"/>
<dbReference type="PDBsum" id="6CJR"/>
<dbReference type="PDBsum" id="6CJS"/>
<dbReference type="SMR" id="P46598"/>
<dbReference type="BioGRID" id="1220045">
    <property type="interactions" value="428"/>
</dbReference>
<dbReference type="FunCoup" id="P46598">
    <property type="interactions" value="1615"/>
</dbReference>
<dbReference type="STRING" id="237561.P46598"/>
<dbReference type="BindingDB" id="P46598"/>
<dbReference type="ChEMBL" id="CHEMBL3580503"/>
<dbReference type="ABCD" id="P46598">
    <property type="antibodies" value="8 sequenced antibodies"/>
</dbReference>
<dbReference type="EnsemblFungi" id="C7_02030W_A-T">
    <property type="protein sequence ID" value="C7_02030W_A-T-p1"/>
    <property type="gene ID" value="C7_02030W_A"/>
</dbReference>
<dbReference type="GeneID" id="3636951"/>
<dbReference type="KEGG" id="cal:CAALFM_C702030WA"/>
<dbReference type="CGD" id="CAL0000201062">
    <property type="gene designation" value="HSP90"/>
</dbReference>
<dbReference type="VEuPathDB" id="FungiDB:C7_02030W_A"/>
<dbReference type="eggNOG" id="KOG0019">
    <property type="taxonomic scope" value="Eukaryota"/>
</dbReference>
<dbReference type="HOGENOM" id="CLU_006684_1_3_1"/>
<dbReference type="InParanoid" id="P46598"/>
<dbReference type="OMA" id="MRRMKEM"/>
<dbReference type="OrthoDB" id="28737at2759"/>
<dbReference type="PRO" id="PR:P46598"/>
<dbReference type="Proteomes" id="UP000000559">
    <property type="component" value="Chromosome 7"/>
</dbReference>
<dbReference type="GO" id="GO:0009986">
    <property type="term" value="C:cell surface"/>
    <property type="evidence" value="ECO:0000314"/>
    <property type="project" value="CGD"/>
</dbReference>
<dbReference type="GO" id="GO:0005737">
    <property type="term" value="C:cytoplasm"/>
    <property type="evidence" value="ECO:0000314"/>
    <property type="project" value="CGD"/>
</dbReference>
<dbReference type="GO" id="GO:0005829">
    <property type="term" value="C:cytosol"/>
    <property type="evidence" value="ECO:0000318"/>
    <property type="project" value="GO_Central"/>
</dbReference>
<dbReference type="GO" id="GO:1903561">
    <property type="term" value="C:extracellular vesicle"/>
    <property type="evidence" value="ECO:0000314"/>
    <property type="project" value="CGD"/>
</dbReference>
<dbReference type="GO" id="GO:0009277">
    <property type="term" value="C:fungal-type cell wall"/>
    <property type="evidence" value="ECO:0000314"/>
    <property type="project" value="CGD"/>
</dbReference>
<dbReference type="GO" id="GO:0030446">
    <property type="term" value="C:hyphal cell wall"/>
    <property type="evidence" value="ECO:0000314"/>
    <property type="project" value="CGD"/>
</dbReference>
<dbReference type="GO" id="GO:0016020">
    <property type="term" value="C:membrane"/>
    <property type="evidence" value="ECO:0000314"/>
    <property type="project" value="CGD"/>
</dbReference>
<dbReference type="GO" id="GO:0005739">
    <property type="term" value="C:mitochondrion"/>
    <property type="evidence" value="ECO:0000314"/>
    <property type="project" value="CGD"/>
</dbReference>
<dbReference type="GO" id="GO:0048471">
    <property type="term" value="C:perinuclear region of cytoplasm"/>
    <property type="evidence" value="ECO:0000318"/>
    <property type="project" value="GO_Central"/>
</dbReference>
<dbReference type="GO" id="GO:0005886">
    <property type="term" value="C:plasma membrane"/>
    <property type="evidence" value="ECO:0000314"/>
    <property type="project" value="CGD"/>
</dbReference>
<dbReference type="GO" id="GO:0032991">
    <property type="term" value="C:protein-containing complex"/>
    <property type="evidence" value="ECO:0000318"/>
    <property type="project" value="GO_Central"/>
</dbReference>
<dbReference type="GO" id="GO:0005524">
    <property type="term" value="F:ATP binding"/>
    <property type="evidence" value="ECO:0000318"/>
    <property type="project" value="GO_Central"/>
</dbReference>
<dbReference type="GO" id="GO:0016887">
    <property type="term" value="F:ATP hydrolysis activity"/>
    <property type="evidence" value="ECO:0000318"/>
    <property type="project" value="GO_Central"/>
</dbReference>
<dbReference type="GO" id="GO:0140662">
    <property type="term" value="F:ATP-dependent protein folding chaperone"/>
    <property type="evidence" value="ECO:0007669"/>
    <property type="project" value="InterPro"/>
</dbReference>
<dbReference type="GO" id="GO:0051082">
    <property type="term" value="F:unfolded protein binding"/>
    <property type="evidence" value="ECO:0000318"/>
    <property type="project" value="GO_Central"/>
</dbReference>
<dbReference type="GO" id="GO:0034605">
    <property type="term" value="P:cellular response to heat"/>
    <property type="evidence" value="ECO:0000315"/>
    <property type="project" value="CGD"/>
</dbReference>
<dbReference type="GO" id="GO:0030447">
    <property type="term" value="P:filamentous growth"/>
    <property type="evidence" value="ECO:0000315"/>
    <property type="project" value="CGD"/>
</dbReference>
<dbReference type="GO" id="GO:0044182">
    <property type="term" value="P:filamentous growth of a population of unicellular organisms"/>
    <property type="evidence" value="ECO:0000315"/>
    <property type="project" value="CGD"/>
</dbReference>
<dbReference type="GO" id="GO:1900429">
    <property type="term" value="P:negative regulation of filamentous growth of a population of unicellular organisms"/>
    <property type="evidence" value="ECO:0000315"/>
    <property type="project" value="CGD"/>
</dbReference>
<dbReference type="GO" id="GO:0030518">
    <property type="term" value="P:nuclear receptor-mediated steroid hormone signaling pathway"/>
    <property type="evidence" value="ECO:0000316"/>
    <property type="project" value="CGD"/>
</dbReference>
<dbReference type="GO" id="GO:0006457">
    <property type="term" value="P:protein folding"/>
    <property type="evidence" value="ECO:0000316"/>
    <property type="project" value="CGD"/>
</dbReference>
<dbReference type="GO" id="GO:0050821">
    <property type="term" value="P:protein stabilization"/>
    <property type="evidence" value="ECO:0000318"/>
    <property type="project" value="GO_Central"/>
</dbReference>
<dbReference type="GO" id="GO:0042981">
    <property type="term" value="P:regulation of apoptotic process"/>
    <property type="evidence" value="ECO:0000315"/>
    <property type="project" value="CGD"/>
</dbReference>
<dbReference type="CDD" id="cd16927">
    <property type="entry name" value="HATPase_Hsp90-like"/>
    <property type="match status" value="1"/>
</dbReference>
<dbReference type="FunFam" id="1.20.120.790:FF:000001">
    <property type="entry name" value="Heat shock protein 90 alpha"/>
    <property type="match status" value="1"/>
</dbReference>
<dbReference type="FunFam" id="3.30.230.80:FF:000001">
    <property type="entry name" value="Heat shock protein 90 alpha"/>
    <property type="match status" value="1"/>
</dbReference>
<dbReference type="FunFam" id="3.40.50.11260:FF:000001">
    <property type="entry name" value="Heat shock protein 90 alpha"/>
    <property type="match status" value="1"/>
</dbReference>
<dbReference type="FunFam" id="3.30.565.10:FF:000001">
    <property type="entry name" value="Heat shock protein HSP 90-alpha"/>
    <property type="match status" value="1"/>
</dbReference>
<dbReference type="Gene3D" id="3.30.230.80">
    <property type="match status" value="1"/>
</dbReference>
<dbReference type="Gene3D" id="3.40.50.11260">
    <property type="match status" value="1"/>
</dbReference>
<dbReference type="Gene3D" id="1.20.120.790">
    <property type="entry name" value="Heat shock protein 90, C-terminal domain"/>
    <property type="match status" value="1"/>
</dbReference>
<dbReference type="Gene3D" id="3.30.565.10">
    <property type="entry name" value="Histidine kinase-like ATPase, C-terminal domain"/>
    <property type="match status" value="1"/>
</dbReference>
<dbReference type="HAMAP" id="MF_00505">
    <property type="entry name" value="HSP90"/>
    <property type="match status" value="1"/>
</dbReference>
<dbReference type="InterPro" id="IPR036890">
    <property type="entry name" value="HATPase_C_sf"/>
</dbReference>
<dbReference type="InterPro" id="IPR019805">
    <property type="entry name" value="Heat_shock_protein_90_CS"/>
</dbReference>
<dbReference type="InterPro" id="IPR037196">
    <property type="entry name" value="HSP90_C"/>
</dbReference>
<dbReference type="InterPro" id="IPR001404">
    <property type="entry name" value="Hsp90_fam"/>
</dbReference>
<dbReference type="InterPro" id="IPR020575">
    <property type="entry name" value="Hsp90_N"/>
</dbReference>
<dbReference type="InterPro" id="IPR020568">
    <property type="entry name" value="Ribosomal_Su5_D2-typ_SF"/>
</dbReference>
<dbReference type="NCBIfam" id="NF003555">
    <property type="entry name" value="PRK05218.1"/>
    <property type="match status" value="1"/>
</dbReference>
<dbReference type="PANTHER" id="PTHR11528">
    <property type="entry name" value="HEAT SHOCK PROTEIN 90 FAMILY MEMBER"/>
    <property type="match status" value="1"/>
</dbReference>
<dbReference type="Pfam" id="PF13589">
    <property type="entry name" value="HATPase_c_3"/>
    <property type="match status" value="1"/>
</dbReference>
<dbReference type="Pfam" id="PF00183">
    <property type="entry name" value="HSP90"/>
    <property type="match status" value="1"/>
</dbReference>
<dbReference type="PIRSF" id="PIRSF002583">
    <property type="entry name" value="Hsp90"/>
    <property type="match status" value="1"/>
</dbReference>
<dbReference type="PRINTS" id="PR00775">
    <property type="entry name" value="HEATSHOCK90"/>
</dbReference>
<dbReference type="SMART" id="SM00387">
    <property type="entry name" value="HATPase_c"/>
    <property type="match status" value="1"/>
</dbReference>
<dbReference type="SUPFAM" id="SSF55874">
    <property type="entry name" value="ATPase domain of HSP90 chaperone/DNA topoisomerase II/histidine kinase"/>
    <property type="match status" value="1"/>
</dbReference>
<dbReference type="SUPFAM" id="SSF110942">
    <property type="entry name" value="HSP90 C-terminal domain"/>
    <property type="match status" value="1"/>
</dbReference>
<dbReference type="SUPFAM" id="SSF54211">
    <property type="entry name" value="Ribosomal protein S5 domain 2-like"/>
    <property type="match status" value="1"/>
</dbReference>
<dbReference type="PROSITE" id="PS00298">
    <property type="entry name" value="HSP90"/>
    <property type="match status" value="1"/>
</dbReference>
<sequence>MADAKVETHEFTAEISQLMSLIINTVYSNKEIFLRELISNASDALDKIRYQALSDPSQLESEPELFIRIIPQKDQKVLEIRDSGIGMTKADLVNNLGTIAKSGTKSFMEALSAGADVSMIGQFGVGFYSLFLVADHVQVISKHNDDEQYVWESNAGGKFTVTLDETNERLGRGTMLRLFLKEDQLEYLEEKRIKEVVKKHSEFVAYPIQLVVTKEVEKEVPETEEEDKAAEEDDKKPKLEEVKDEEDEKKEKKTKTVKEEVTETEELNKTKPLWTRNPSDITQDEYNAFYKSISNDWEDPLAVKHFSVEGQLEFRAILFVPKRAPFDAFESKKKKNNIKLYVRRVFITDDAEELIPEWLSFIKGVVDSEDLPLNLSREMLQQNKILKVIRKNIVKKMIETFNEISEDQEQFNQFYTAFSKNIKLGIHEDAQNRQSLAKLLRFYSTKSSEEMTSLSDYVTRMPEHQKNIYYITGESIKAVEKSPFLDALKAKNFEVLFMVDPIDEYAMTQLKEFEDKKLVDITKDFELEESDEEKAAREKEIKEYEPLTKALKDILGDQVEKVVVSYKLVDAPAAIRTGQFGWSANMERIMKAQALRDTTMSSYMSSKKTFEISPSSPIIKELKKKVETDGAEDKTVKDLTTLLFDTALLTSGFTLDEPSNFAHRINRLIALGLNIDDDSEETAVEPEATTTASTDEPAGESAMEEVD</sequence>
<evidence type="ECO:0000250" key="1"/>
<evidence type="ECO:0000256" key="2">
    <source>
        <dbReference type="SAM" id="MobiDB-lite"/>
    </source>
</evidence>
<evidence type="ECO:0000305" key="3"/>
<evidence type="ECO:0007829" key="4">
    <source>
        <dbReference type="PDB" id="6CJI"/>
    </source>
</evidence>
<evidence type="ECO:0007829" key="5">
    <source>
        <dbReference type="PDB" id="6CJP"/>
    </source>
</evidence>
<organism>
    <name type="scientific">Candida albicans (strain SC5314 / ATCC MYA-2876)</name>
    <name type="common">Yeast</name>
    <dbReference type="NCBI Taxonomy" id="237561"/>
    <lineage>
        <taxon>Eukaryota</taxon>
        <taxon>Fungi</taxon>
        <taxon>Dikarya</taxon>
        <taxon>Ascomycota</taxon>
        <taxon>Saccharomycotina</taxon>
        <taxon>Pichiomycetes</taxon>
        <taxon>Debaryomycetaceae</taxon>
        <taxon>Candida/Lodderomyces clade</taxon>
        <taxon>Candida</taxon>
    </lineage>
</organism>
<comment type="function">
    <text evidence="1">Molecular chaperone that promotes the maturation, structural maintenance and proper regulation of specific target proteins involved for instance in cell cycle control and signal transduction. Undergoes a functional cycle that is linked to its ATPase activity. This cycle probably induces conformational changes in the client proteins, thereby causing their activation. Interacts dynamically with various co-chaperones that modulate its substrate recognition, ATPase cycle and chaperone function (By similarity).</text>
</comment>
<comment type="subunit">
    <text evidence="1">Homodimer.</text>
</comment>
<comment type="subcellular location">
    <subcellularLocation>
        <location evidence="1">Cytoplasm</location>
    </subcellularLocation>
</comment>
<comment type="domain">
    <text evidence="1">The TPR repeat-binding motif mediates interaction with TPR repeat-containing proteins.</text>
</comment>
<comment type="similarity">
    <text evidence="3">Belongs to the heat shock protein 90 family.</text>
</comment>
<keyword id="KW-0002">3D-structure</keyword>
<keyword id="KW-0067">ATP-binding</keyword>
<keyword id="KW-0143">Chaperone</keyword>
<keyword id="KW-0963">Cytoplasm</keyword>
<keyword id="KW-0547">Nucleotide-binding</keyword>
<keyword id="KW-1185">Reference proteome</keyword>
<reference key="1">
    <citation type="journal article" date="1995" name="Infect. Immun.">
        <title>Structure and regulation of the HSP90 gene from the pathogenic fungus Candida albicans.</title>
        <authorList>
            <person name="Swoboda R.K."/>
            <person name="Bertram G."/>
            <person name="Budge S."/>
            <person name="Gooday G.W."/>
            <person name="Gow N.A.R."/>
            <person name="Brown A.J.P."/>
        </authorList>
    </citation>
    <scope>NUCLEOTIDE SEQUENCE [GENOMIC DNA]</scope>
    <source>
        <strain>ATCC 10261 / CBS 2718 / NBRC 1061</strain>
    </source>
</reference>
<reference key="2">
    <citation type="journal article" date="1996" name="Infect. Immun.">
        <authorList>
            <person name="Swoboda R.K."/>
            <person name="Bertram G."/>
            <person name="Budge S."/>
            <person name="Gooday G.W."/>
            <person name="Gow N.A.R."/>
            <person name="Brown A.J.P."/>
        </authorList>
    </citation>
    <scope>ERRATUM OF PUBMED:7591093</scope>
</reference>
<reference key="3">
    <citation type="journal article" date="2005" name="Genetics">
        <title>Sequence finishing and gene mapping for Candida albicans chromosome 7 and syntenic analysis against the Saccharomyces cerevisiae genome.</title>
        <authorList>
            <person name="Chibana H."/>
            <person name="Oka N."/>
            <person name="Nakayama H."/>
            <person name="Aoyama T."/>
            <person name="Magee B.B."/>
            <person name="Magee P.T."/>
            <person name="Mikami Y."/>
        </authorList>
    </citation>
    <scope>NUCLEOTIDE SEQUENCE [LARGE SCALE GENOMIC DNA]</scope>
    <source>
        <strain>SC5314 / ATCC MYA-2876</strain>
    </source>
</reference>
<reference key="4">
    <citation type="journal article" date="2007" name="Genome Biol.">
        <title>Assembly of the Candida albicans genome into sixteen supercontigs aligned on the eight chromosomes.</title>
        <authorList>
            <person name="van het Hoog M."/>
            <person name="Rast T.J."/>
            <person name="Martchenko M."/>
            <person name="Grindle S."/>
            <person name="Dignard D."/>
            <person name="Hogues H."/>
            <person name="Cuomo C."/>
            <person name="Berriman M."/>
            <person name="Scherer S."/>
            <person name="Magee B.B."/>
            <person name="Whiteway M."/>
            <person name="Chibana H."/>
            <person name="Nantel A."/>
            <person name="Magee P.T."/>
        </authorList>
    </citation>
    <scope>GENOME REANNOTATION</scope>
    <source>
        <strain>SC5314 / ATCC MYA-2876</strain>
    </source>
</reference>
<reference key="5">
    <citation type="journal article" date="2013" name="Genome Biol.">
        <title>Assembly of a phased diploid Candida albicans genome facilitates allele-specific measurements and provides a simple model for repeat and indel structure.</title>
        <authorList>
            <person name="Muzzey D."/>
            <person name="Schwartz K."/>
            <person name="Weissman J.S."/>
            <person name="Sherlock G."/>
        </authorList>
    </citation>
    <scope>NUCLEOTIDE SEQUENCE [LARGE SCALE GENOMIC DNA]</scope>
    <scope>GENOME REANNOTATION</scope>
    <source>
        <strain>SC5314 / ATCC MYA-2876</strain>
    </source>
</reference>
<reference key="6">
    <citation type="journal article" date="2004" name="Proc. Natl. Acad. Sci. U.S.A.">
        <title>The diploid genome sequence of Candida albicans.</title>
        <authorList>
            <person name="Jones T."/>
            <person name="Federspiel N.A."/>
            <person name="Chibana H."/>
            <person name="Dungan J."/>
            <person name="Kalman S."/>
            <person name="Magee B.B."/>
            <person name="Newport G."/>
            <person name="Thorstenson Y.R."/>
            <person name="Agabian N."/>
            <person name="Magee P.T."/>
            <person name="Davis R.W."/>
            <person name="Scherer S."/>
        </authorList>
    </citation>
    <scope>NUCLEOTIDE SEQUENCE [LARGE SCALE GENOMIC DNA]</scope>
    <source>
        <strain>SC5314 / ATCC MYA-2876</strain>
    </source>
</reference>
<feature type="chain" id="PRO_0000062961" description="Heat shock protein 90 homolog">
    <location>
        <begin position="1"/>
        <end position="707"/>
    </location>
</feature>
<feature type="region of interest" description="Disordered" evidence="2">
    <location>
        <begin position="216"/>
        <end position="257"/>
    </location>
</feature>
<feature type="region of interest" description="Disordered" evidence="2">
    <location>
        <begin position="676"/>
        <end position="707"/>
    </location>
</feature>
<feature type="short sequence motif" description="TPR repeat-binding">
    <location>
        <begin position="703"/>
        <end position="707"/>
    </location>
</feature>
<feature type="compositionally biased region" description="Acidic residues" evidence="2">
    <location>
        <begin position="222"/>
        <end position="232"/>
    </location>
</feature>
<feature type="binding site" evidence="1">
    <location>
        <position position="40"/>
    </location>
    <ligand>
        <name>ATP</name>
        <dbReference type="ChEBI" id="CHEBI:30616"/>
    </ligand>
</feature>
<feature type="binding site" evidence="1">
    <location>
        <position position="82"/>
    </location>
    <ligand>
        <name>ATP</name>
        <dbReference type="ChEBI" id="CHEBI:30616"/>
    </ligand>
</feature>
<feature type="binding site" evidence="1">
    <location>
        <position position="101"/>
    </location>
    <ligand>
        <name>ATP</name>
        <dbReference type="ChEBI" id="CHEBI:30616"/>
    </ligand>
</feature>
<feature type="binding site" evidence="1">
    <location>
        <position position="127"/>
    </location>
    <ligand>
        <name>ATP</name>
        <dbReference type="ChEBI" id="CHEBI:30616"/>
    </ligand>
</feature>
<feature type="binding site" evidence="1">
    <location>
        <position position="377"/>
    </location>
    <ligand>
        <name>ATP</name>
        <dbReference type="ChEBI" id="CHEBI:30616"/>
    </ligand>
</feature>
<feature type="strand" evidence="4">
    <location>
        <begin position="7"/>
        <end position="10"/>
    </location>
</feature>
<feature type="helix" evidence="4">
    <location>
        <begin position="13"/>
        <end position="24"/>
    </location>
</feature>
<feature type="helix" evidence="4">
    <location>
        <begin position="32"/>
        <end position="54"/>
    </location>
</feature>
<feature type="helix" evidence="4">
    <location>
        <begin position="56"/>
        <end position="59"/>
    </location>
</feature>
<feature type="strand" evidence="5">
    <location>
        <begin position="60"/>
        <end position="62"/>
    </location>
</feature>
<feature type="strand" evidence="4">
    <location>
        <begin position="67"/>
        <end position="72"/>
    </location>
</feature>
<feature type="turn" evidence="4">
    <location>
        <begin position="73"/>
        <end position="76"/>
    </location>
</feature>
<feature type="strand" evidence="4">
    <location>
        <begin position="77"/>
        <end position="82"/>
    </location>
</feature>
<feature type="helix" evidence="4">
    <location>
        <begin position="89"/>
        <end position="97"/>
    </location>
</feature>
<feature type="helix" evidence="4">
    <location>
        <begin position="101"/>
        <end position="113"/>
    </location>
</feature>
<feature type="helix" evidence="4">
    <location>
        <begin position="117"/>
        <end position="123"/>
    </location>
</feature>
<feature type="helix" evidence="4">
    <location>
        <begin position="126"/>
        <end position="132"/>
    </location>
</feature>
<feature type="strand" evidence="4">
    <location>
        <begin position="134"/>
        <end position="142"/>
    </location>
</feature>
<feature type="strand" evidence="4">
    <location>
        <begin position="149"/>
        <end position="153"/>
    </location>
</feature>
<feature type="strand" evidence="4">
    <location>
        <begin position="155"/>
        <end position="163"/>
    </location>
</feature>
<feature type="strand" evidence="4">
    <location>
        <begin position="165"/>
        <end position="167"/>
    </location>
</feature>
<feature type="strand" evidence="4">
    <location>
        <begin position="171"/>
        <end position="180"/>
    </location>
</feature>
<feature type="helix" evidence="4">
    <location>
        <begin position="182"/>
        <end position="188"/>
    </location>
</feature>
<feature type="helix" evidence="4">
    <location>
        <begin position="190"/>
        <end position="200"/>
    </location>
</feature>
<feature type="strand" evidence="4">
    <location>
        <begin position="208"/>
        <end position="210"/>
    </location>
</feature>
<proteinExistence type="evidence at protein level"/>
<name>HSP90_CANAL</name>
<accession>P46598</accession>
<accession>A0A1D8PR20</accession>
<accession>Q3MPE0</accession>
<accession>Q5AH23</accession>